<reference key="1">
    <citation type="journal article" date="2007" name="PLoS ONE">
        <title>Paradoxical DNA repair and peroxide resistance gene conservation in Bacillus pumilus SAFR-032.</title>
        <authorList>
            <person name="Gioia J."/>
            <person name="Yerrapragada S."/>
            <person name="Qin X."/>
            <person name="Jiang H."/>
            <person name="Igboeli O.C."/>
            <person name="Muzny D."/>
            <person name="Dugan-Rocha S."/>
            <person name="Ding Y."/>
            <person name="Hawes A."/>
            <person name="Liu W."/>
            <person name="Perez L."/>
            <person name="Kovar C."/>
            <person name="Dinh H."/>
            <person name="Lee S."/>
            <person name="Nazareth L."/>
            <person name="Blyth P."/>
            <person name="Holder M."/>
            <person name="Buhay C."/>
            <person name="Tirumalai M.R."/>
            <person name="Liu Y."/>
            <person name="Dasgupta I."/>
            <person name="Bokhetache L."/>
            <person name="Fujita M."/>
            <person name="Karouia F."/>
            <person name="Eswara Moorthy P."/>
            <person name="Siefert J."/>
            <person name="Uzman A."/>
            <person name="Buzumbo P."/>
            <person name="Verma A."/>
            <person name="Zwiya H."/>
            <person name="McWilliams B.D."/>
            <person name="Olowu A."/>
            <person name="Clinkenbeard K.D."/>
            <person name="Newcombe D."/>
            <person name="Golebiewski L."/>
            <person name="Petrosino J.F."/>
            <person name="Nicholson W.L."/>
            <person name="Fox G.E."/>
            <person name="Venkateswaran K."/>
            <person name="Highlander S.K."/>
            <person name="Weinstock G.M."/>
        </authorList>
    </citation>
    <scope>NUCLEOTIDE SEQUENCE [LARGE SCALE GENOMIC DNA]</scope>
    <source>
        <strain>SAFR-032</strain>
    </source>
</reference>
<comment type="function">
    <text evidence="1">Located on the platform of the 30S subunit, it bridges several disparate RNA helices of the 16S rRNA. Forms part of the Shine-Dalgarno cleft in the 70S ribosome.</text>
</comment>
<comment type="subunit">
    <text evidence="1">Part of the 30S ribosomal subunit. Interacts with proteins S7 and S18. Binds to IF-3.</text>
</comment>
<comment type="similarity">
    <text evidence="1">Belongs to the universal ribosomal protein uS11 family.</text>
</comment>
<organism>
    <name type="scientific">Bacillus pumilus (strain SAFR-032)</name>
    <dbReference type="NCBI Taxonomy" id="315750"/>
    <lineage>
        <taxon>Bacteria</taxon>
        <taxon>Bacillati</taxon>
        <taxon>Bacillota</taxon>
        <taxon>Bacilli</taxon>
        <taxon>Bacillales</taxon>
        <taxon>Bacillaceae</taxon>
        <taxon>Bacillus</taxon>
    </lineage>
</organism>
<keyword id="KW-0687">Ribonucleoprotein</keyword>
<keyword id="KW-0689">Ribosomal protein</keyword>
<keyword id="KW-0694">RNA-binding</keyword>
<keyword id="KW-0699">rRNA-binding</keyword>
<name>RS11_BACP2</name>
<sequence length="131" mass="13948">MAAARKQNTRKRRVKKNIEAGIAHIRSTFNNTIVTITDVHGNAISWSSAGALGFRGSRKSTPFAAQMAAETAAKGSIEHGLKTLEVTVKGPGSGREAAIRALQAAGLEVTAIRDVTPVPHNGCRPPKRRRV</sequence>
<gene>
    <name evidence="1" type="primary">rpsK</name>
    <name type="ordered locus">BPUM_0129</name>
</gene>
<proteinExistence type="inferred from homology"/>
<accession>A8F9B1</accession>
<dbReference type="EMBL" id="CP000813">
    <property type="protein sequence ID" value="ABV60828.1"/>
    <property type="molecule type" value="Genomic_DNA"/>
</dbReference>
<dbReference type="RefSeq" id="WP_003217231.1">
    <property type="nucleotide sequence ID" value="NZ_VEIS01000020.1"/>
</dbReference>
<dbReference type="SMR" id="A8F9B1"/>
<dbReference type="STRING" id="315750.BPUM_0129"/>
<dbReference type="GeneID" id="66361759"/>
<dbReference type="KEGG" id="bpu:BPUM_0129"/>
<dbReference type="eggNOG" id="COG0100">
    <property type="taxonomic scope" value="Bacteria"/>
</dbReference>
<dbReference type="HOGENOM" id="CLU_072439_5_0_9"/>
<dbReference type="OrthoDB" id="9806415at2"/>
<dbReference type="Proteomes" id="UP000001355">
    <property type="component" value="Chromosome"/>
</dbReference>
<dbReference type="GO" id="GO:1990904">
    <property type="term" value="C:ribonucleoprotein complex"/>
    <property type="evidence" value="ECO:0007669"/>
    <property type="project" value="UniProtKB-KW"/>
</dbReference>
<dbReference type="GO" id="GO:0005840">
    <property type="term" value="C:ribosome"/>
    <property type="evidence" value="ECO:0007669"/>
    <property type="project" value="UniProtKB-KW"/>
</dbReference>
<dbReference type="GO" id="GO:0019843">
    <property type="term" value="F:rRNA binding"/>
    <property type="evidence" value="ECO:0007669"/>
    <property type="project" value="UniProtKB-UniRule"/>
</dbReference>
<dbReference type="GO" id="GO:0003735">
    <property type="term" value="F:structural constituent of ribosome"/>
    <property type="evidence" value="ECO:0007669"/>
    <property type="project" value="InterPro"/>
</dbReference>
<dbReference type="GO" id="GO:0006412">
    <property type="term" value="P:translation"/>
    <property type="evidence" value="ECO:0007669"/>
    <property type="project" value="UniProtKB-UniRule"/>
</dbReference>
<dbReference type="FunFam" id="3.30.420.80:FF:000001">
    <property type="entry name" value="30S ribosomal protein S11"/>
    <property type="match status" value="1"/>
</dbReference>
<dbReference type="Gene3D" id="3.30.420.80">
    <property type="entry name" value="Ribosomal protein S11"/>
    <property type="match status" value="1"/>
</dbReference>
<dbReference type="HAMAP" id="MF_01310">
    <property type="entry name" value="Ribosomal_uS11"/>
    <property type="match status" value="1"/>
</dbReference>
<dbReference type="InterPro" id="IPR001971">
    <property type="entry name" value="Ribosomal_uS11"/>
</dbReference>
<dbReference type="InterPro" id="IPR019981">
    <property type="entry name" value="Ribosomal_uS11_bac-type"/>
</dbReference>
<dbReference type="InterPro" id="IPR018102">
    <property type="entry name" value="Ribosomal_uS11_CS"/>
</dbReference>
<dbReference type="InterPro" id="IPR036967">
    <property type="entry name" value="Ribosomal_uS11_sf"/>
</dbReference>
<dbReference type="NCBIfam" id="NF003698">
    <property type="entry name" value="PRK05309.1"/>
    <property type="match status" value="1"/>
</dbReference>
<dbReference type="NCBIfam" id="TIGR03632">
    <property type="entry name" value="uS11_bact"/>
    <property type="match status" value="1"/>
</dbReference>
<dbReference type="PANTHER" id="PTHR11759">
    <property type="entry name" value="40S RIBOSOMAL PROTEIN S14/30S RIBOSOMAL PROTEIN S11"/>
    <property type="match status" value="1"/>
</dbReference>
<dbReference type="Pfam" id="PF00411">
    <property type="entry name" value="Ribosomal_S11"/>
    <property type="match status" value="1"/>
</dbReference>
<dbReference type="PIRSF" id="PIRSF002131">
    <property type="entry name" value="Ribosomal_S11"/>
    <property type="match status" value="1"/>
</dbReference>
<dbReference type="SUPFAM" id="SSF53137">
    <property type="entry name" value="Translational machinery components"/>
    <property type="match status" value="1"/>
</dbReference>
<dbReference type="PROSITE" id="PS00054">
    <property type="entry name" value="RIBOSOMAL_S11"/>
    <property type="match status" value="1"/>
</dbReference>
<feature type="chain" id="PRO_1000067499" description="Small ribosomal subunit protein uS11">
    <location>
        <begin position="1"/>
        <end position="131"/>
    </location>
</feature>
<evidence type="ECO:0000255" key="1">
    <source>
        <dbReference type="HAMAP-Rule" id="MF_01310"/>
    </source>
</evidence>
<evidence type="ECO:0000305" key="2"/>
<protein>
    <recommendedName>
        <fullName evidence="1">Small ribosomal subunit protein uS11</fullName>
    </recommendedName>
    <alternativeName>
        <fullName evidence="2">30S ribosomal protein S11</fullName>
    </alternativeName>
</protein>